<comment type="function">
    <text evidence="7">pEKW and poly-His-poly-Gly peptides may serve as metalloproteinase inhibitors during glandular storage. Their inhibition may be instantly disengaged, by dilution or physiochemical change, when venom is injected into tissue of the prey.</text>
</comment>
<comment type="function">
    <molecule>C-type natriuretic peptide</molecule>
    <text evidence="1">has a vasorelaxant activity in rat aortic strips and a diuretic potency in anesthetized rats (By similarity). May act by activating natriuretic receptors (NPR1 and/or NPR2).</text>
</comment>
<comment type="subcellular location">
    <subcellularLocation>
        <location evidence="6">Secreted</location>
    </subcellularLocation>
</comment>
<comment type="tissue specificity">
    <text evidence="9">Expressed by the venom gland.</text>
</comment>
<comment type="similarity">
    <text evidence="8">In the C-terminal section; belongs to the natriuretic peptide family.</text>
</comment>
<comment type="similarity">
    <text evidence="8">In the central section; belongs to the pHpG family.</text>
</comment>
<organism>
    <name type="scientific">Echis ocellatus</name>
    <name type="common">Ocellated saw-scaled viper</name>
    <dbReference type="NCBI Taxonomy" id="99586"/>
    <lineage>
        <taxon>Eukaryota</taxon>
        <taxon>Metazoa</taxon>
        <taxon>Chordata</taxon>
        <taxon>Craniata</taxon>
        <taxon>Vertebrata</taxon>
        <taxon>Euteleostomi</taxon>
        <taxon>Lepidosauria</taxon>
        <taxon>Squamata</taxon>
        <taxon>Bifurcata</taxon>
        <taxon>Unidentata</taxon>
        <taxon>Episquamata</taxon>
        <taxon>Toxicofera</taxon>
        <taxon>Serpentes</taxon>
        <taxon>Colubroidea</taxon>
        <taxon>Viperidae</taxon>
        <taxon>Viperinae</taxon>
        <taxon>Echis</taxon>
    </lineage>
</organism>
<accession>A8YPR6</accession>
<accession>A8YPR7</accession>
<accession>A8YPR8</accession>
<keyword id="KW-0165">Cleavage on pair of basic residues</keyword>
<keyword id="KW-0903">Direct protein sequencing</keyword>
<keyword id="KW-1015">Disulfide bond</keyword>
<keyword id="KW-0382">Hypotensive agent</keyword>
<keyword id="KW-0481">Metalloenzyme inhibitor</keyword>
<keyword id="KW-0483">Metalloprotease inhibitor</keyword>
<keyword id="KW-0646">Protease inhibitor</keyword>
<keyword id="KW-0873">Pyrrolidone carboxylic acid</keyword>
<keyword id="KW-0677">Repeat</keyword>
<keyword id="KW-0964">Secreted</keyword>
<keyword id="KW-0732">Signal</keyword>
<keyword id="KW-0800">Toxin</keyword>
<keyword id="KW-0838">Vasoactive</keyword>
<keyword id="KW-0840">Vasodilator</keyword>
<reference key="1">
    <citation type="journal article" date="2008" name="Biochem. Biophys. Res. Commun.">
        <title>Molecular characterisation of endogenous snake venom metalloproteinase inhibitors.</title>
        <authorList>
            <person name="Wagstaff S.C."/>
            <person name="Favreau P."/>
            <person name="Cheneval O."/>
            <person name="Laing G.D."/>
            <person name="Wilkinson M.C."/>
            <person name="Miller R.L."/>
            <person name="Stoecklin R."/>
            <person name="Harrison R.A."/>
        </authorList>
    </citation>
    <scope>NUCLEOTIDE SEQUENCE [MRNA]</scope>
    <scope>PROTEIN SEQUENCE OF 39-41; 51-53; 63-65; 75-77; 87-89; 99-101; 111-113; 123-125; 135-137; 147-149; 159-161 AND 250-277</scope>
    <scope>PYROGLUTAMATE FORMATION AT GLN-39; GLN-51; GLN-63; GLN-75; GLN-87; GLN-99; GLN-111; GLN-123; GLN-135; GLN-147 AND GLN-159</scope>
    <scope>IDENTIFICATION BY MASS SPECTROMETRY</scope>
    <scope>SUBCELLULAR LOCATION</scope>
    <source>
        <tissue>Venom</tissue>
        <tissue>Venom gland</tissue>
    </source>
</reference>
<dbReference type="EMBL" id="AM902491">
    <property type="protein sequence ID" value="CAP17273.1"/>
    <property type="molecule type" value="mRNA"/>
</dbReference>
<dbReference type="EMBL" id="AM902490">
    <property type="protein sequence ID" value="CAP17272.1"/>
    <property type="molecule type" value="mRNA"/>
</dbReference>
<dbReference type="EMBL" id="AM902489">
    <property type="protein sequence ID" value="CAP17271.1"/>
    <property type="molecule type" value="mRNA"/>
</dbReference>
<dbReference type="GO" id="GO:0005576">
    <property type="term" value="C:extracellular region"/>
    <property type="evidence" value="ECO:0007669"/>
    <property type="project" value="UniProtKB-SubCell"/>
</dbReference>
<dbReference type="GO" id="GO:0005179">
    <property type="term" value="F:hormone activity"/>
    <property type="evidence" value="ECO:0007669"/>
    <property type="project" value="InterPro"/>
</dbReference>
<dbReference type="GO" id="GO:0030414">
    <property type="term" value="F:peptidase inhibitor activity"/>
    <property type="evidence" value="ECO:0007669"/>
    <property type="project" value="UniProtKB-KW"/>
</dbReference>
<dbReference type="GO" id="GO:0090729">
    <property type="term" value="F:toxin activity"/>
    <property type="evidence" value="ECO:0007669"/>
    <property type="project" value="UniProtKB-KW"/>
</dbReference>
<dbReference type="GO" id="GO:0006182">
    <property type="term" value="P:cGMP biosynthetic process"/>
    <property type="evidence" value="ECO:0007669"/>
    <property type="project" value="TreeGrafter"/>
</dbReference>
<dbReference type="GO" id="GO:0007168">
    <property type="term" value="P:receptor guanylyl cyclase signaling pathway"/>
    <property type="evidence" value="ECO:0007669"/>
    <property type="project" value="TreeGrafter"/>
</dbReference>
<dbReference type="GO" id="GO:0008217">
    <property type="term" value="P:regulation of blood pressure"/>
    <property type="evidence" value="ECO:0007669"/>
    <property type="project" value="UniProtKB-KW"/>
</dbReference>
<dbReference type="GO" id="GO:0042311">
    <property type="term" value="P:vasodilation"/>
    <property type="evidence" value="ECO:0007669"/>
    <property type="project" value="UniProtKB-KW"/>
</dbReference>
<dbReference type="InterPro" id="IPR000663">
    <property type="entry name" value="Natr_peptide"/>
</dbReference>
<dbReference type="InterPro" id="IPR030480">
    <property type="entry name" value="Natr_peptide_CS"/>
</dbReference>
<dbReference type="InterPro" id="IPR002408">
    <property type="entry name" value="Natriuretic_peptide_brain"/>
</dbReference>
<dbReference type="PANTHER" id="PTHR12167">
    <property type="entry name" value="C-TYPE NATRIURETIC PEPTIDE"/>
    <property type="match status" value="1"/>
</dbReference>
<dbReference type="PANTHER" id="PTHR12167:SF2">
    <property type="entry name" value="C-TYPE NATRIURETIC PEPTIDE"/>
    <property type="match status" value="1"/>
</dbReference>
<dbReference type="Pfam" id="PF00212">
    <property type="entry name" value="ANP"/>
    <property type="match status" value="1"/>
</dbReference>
<dbReference type="PRINTS" id="PR00712">
    <property type="entry name" value="BNATPEPTIDE"/>
</dbReference>
<dbReference type="PRINTS" id="PR00710">
    <property type="entry name" value="NATPEPTIDES"/>
</dbReference>
<dbReference type="SMART" id="SM00183">
    <property type="entry name" value="NAT_PEP"/>
    <property type="match status" value="1"/>
</dbReference>
<dbReference type="PROSITE" id="PS00263">
    <property type="entry name" value="NATRIURETIC_PEPTIDE"/>
    <property type="match status" value="1"/>
</dbReference>
<sequence length="308" mass="32722">MFVSRLAASGLLLLSLLALSLDGKPLPQRQPHHIQPMEQKWLAPDAPPLEQKWLAPDAPPLEQKWLAPAAPPLEQKWLAPDAPPMEQKWLAPDAPPMEQKWLAPDAPPMEQKWLAPDAPPMEQKWLAPDAAPLEQKWLAPDAPPMEQKWLAPDAPPMEQKWQPQIPSLMEQRQLSSGGTTALRQELSPRAEAASGPAVVGGGGGGGGGSKAALALPKPPKAKGAAAATSRLMRDLRPDGKQASQKWGRLVDHDHDHHHHHHPGSSVGGGGGGGGGGARRLKGLAKKGVAKGCFGLKLDRIGSMSGLGC</sequence>
<feature type="signal peptide" evidence="4">
    <location>
        <begin position="1"/>
        <end position="23"/>
    </location>
</feature>
<feature type="propeptide" id="PRO_0000335926" evidence="8">
    <location>
        <begin position="24"/>
        <end position="38"/>
    </location>
</feature>
<feature type="peptide" id="PRO_0000335927" description="Tripeptide pEKW 1">
    <location>
        <begin position="39"/>
        <end position="41"/>
    </location>
</feature>
<feature type="propeptide" id="PRO_0000335928" evidence="8">
    <location>
        <begin position="42"/>
        <end position="50"/>
    </location>
</feature>
<feature type="peptide" id="PRO_0000335929" description="Tripeptide pEKW 2">
    <location>
        <begin position="51"/>
        <end position="53"/>
    </location>
</feature>
<feature type="propeptide" id="PRO_0000335930" evidence="8">
    <location>
        <begin position="54"/>
        <end position="62"/>
    </location>
</feature>
<feature type="peptide" id="PRO_0000335931" description="Tripeptide pEKW 3">
    <location>
        <begin position="63"/>
        <end position="65"/>
    </location>
</feature>
<feature type="propeptide" id="PRO_0000335932" evidence="8">
    <location>
        <begin position="66"/>
        <end position="74"/>
    </location>
</feature>
<feature type="peptide" id="PRO_0000335933" description="Tripeptide pEKW 4">
    <location>
        <begin position="75"/>
        <end position="77"/>
    </location>
</feature>
<feature type="propeptide" id="PRO_0000335934" evidence="8">
    <location>
        <begin position="78"/>
        <end position="86"/>
    </location>
</feature>
<feature type="peptide" id="PRO_0000335935" description="Tripeptide pEKW 5">
    <location>
        <begin position="87"/>
        <end position="89"/>
    </location>
</feature>
<feature type="propeptide" id="PRO_0000335936" evidence="8">
    <location>
        <begin position="90"/>
        <end position="98"/>
    </location>
</feature>
<feature type="peptide" id="PRO_0000335937" description="Tripeptide pEKW 6">
    <location>
        <begin position="99"/>
        <end position="101"/>
    </location>
</feature>
<feature type="propeptide" id="PRO_0000335938" evidence="8">
    <location>
        <begin position="102"/>
        <end position="110"/>
    </location>
</feature>
<feature type="peptide" id="PRO_0000335939" description="Tripeptide pEKW 7">
    <location>
        <begin position="111"/>
        <end position="113"/>
    </location>
</feature>
<feature type="propeptide" id="PRO_0000335940" evidence="8">
    <location>
        <begin position="114"/>
        <end position="122"/>
    </location>
</feature>
<feature type="peptide" id="PRO_0000335941" description="Tripeptide pEKW 8">
    <location>
        <begin position="123"/>
        <end position="125"/>
    </location>
</feature>
<feature type="propeptide" id="PRO_0000335942" evidence="8">
    <location>
        <begin position="126"/>
        <end position="134"/>
    </location>
</feature>
<feature type="peptide" id="PRO_0000335943" description="Tripeptide pEKW 9">
    <location>
        <begin position="135"/>
        <end position="137"/>
    </location>
</feature>
<feature type="propeptide" id="PRO_0000335944" evidence="8">
    <location>
        <begin position="138"/>
        <end position="146"/>
    </location>
</feature>
<feature type="peptide" id="PRO_0000335945" description="Tripeptide pEKW 10">
    <location>
        <begin position="147"/>
        <end position="149"/>
    </location>
</feature>
<feature type="propeptide" id="PRO_0000335946" evidence="8">
    <location>
        <begin position="150"/>
        <end position="158"/>
    </location>
</feature>
<feature type="peptide" id="PRO_0000335947" description="Tripeptide pEKW 11">
    <location>
        <begin position="159"/>
        <end position="161"/>
    </location>
</feature>
<feature type="propeptide" id="PRO_0000335948" evidence="8">
    <location>
        <begin position="162"/>
        <end position="249"/>
    </location>
</feature>
<feature type="peptide" id="PRO_0000335949" description="Poly-His-poly-Gly peptide 4">
    <location>
        <begin position="250"/>
        <end position="277"/>
    </location>
</feature>
<feature type="peptide" id="PRO_0000335950" description="Poly-His-poly-Gly peptide 3">
    <location>
        <begin position="250"/>
        <end position="276"/>
    </location>
</feature>
<feature type="peptide" id="PRO_0000335951" description="Poly-His-poly-Gly peptide 2">
    <location>
        <begin position="251"/>
        <end position="277"/>
    </location>
</feature>
<feature type="peptide" id="PRO_0000335952" description="Poly-His-poly-Gly peptide 1">
    <location>
        <begin position="251"/>
        <end position="276"/>
    </location>
</feature>
<feature type="propeptide" id="PRO_0000335953" evidence="8">
    <location>
        <begin position="278"/>
        <end position="286"/>
    </location>
</feature>
<feature type="peptide" id="PRO_0000335954" description="C-type natriuretic peptide" evidence="3">
    <location>
        <begin position="287"/>
        <end position="308"/>
    </location>
</feature>
<feature type="region of interest" description="Disordered" evidence="5">
    <location>
        <begin position="172"/>
        <end position="228"/>
    </location>
</feature>
<feature type="region of interest" description="Disordered" evidence="5">
    <location>
        <begin position="252"/>
        <end position="279"/>
    </location>
</feature>
<feature type="compositionally biased region" description="Polar residues" evidence="5">
    <location>
        <begin position="172"/>
        <end position="182"/>
    </location>
</feature>
<feature type="compositionally biased region" description="Gly residues" evidence="5">
    <location>
        <begin position="198"/>
        <end position="209"/>
    </location>
</feature>
<feature type="compositionally biased region" description="Low complexity" evidence="5">
    <location>
        <begin position="210"/>
        <end position="227"/>
    </location>
</feature>
<feature type="compositionally biased region" description="Gly residues" evidence="5">
    <location>
        <begin position="265"/>
        <end position="277"/>
    </location>
</feature>
<feature type="modified residue" description="Pyrrolidone carboxylic acid" evidence="6">
    <location>
        <position position="39"/>
    </location>
</feature>
<feature type="modified residue" description="Pyrrolidone carboxylic acid" evidence="6">
    <location>
        <position position="51"/>
    </location>
</feature>
<feature type="modified residue" description="Pyrrolidone carboxylic acid" evidence="6">
    <location>
        <position position="63"/>
    </location>
</feature>
<feature type="modified residue" description="Pyrrolidone carboxylic acid" evidence="6">
    <location>
        <position position="75"/>
    </location>
</feature>
<feature type="modified residue" description="Pyrrolidone carboxylic acid" evidence="6">
    <location>
        <position position="87"/>
    </location>
</feature>
<feature type="modified residue" description="Pyrrolidone carboxylic acid" evidence="6">
    <location>
        <position position="99"/>
    </location>
</feature>
<feature type="modified residue" description="Pyrrolidone carboxylic acid" evidence="6">
    <location>
        <position position="111"/>
    </location>
</feature>
<feature type="modified residue" description="Pyrrolidone carboxylic acid" evidence="6">
    <location>
        <position position="123"/>
    </location>
</feature>
<feature type="modified residue" description="Pyrrolidone carboxylic acid" evidence="6">
    <location>
        <position position="135"/>
    </location>
</feature>
<feature type="modified residue" description="Pyrrolidone carboxylic acid" evidence="6">
    <location>
        <position position="147"/>
    </location>
</feature>
<feature type="modified residue" description="Pyrrolidone carboxylic acid" evidence="6">
    <location>
        <position position="159"/>
    </location>
</feature>
<feature type="disulfide bond" evidence="2">
    <location>
        <begin position="292"/>
        <end position="308"/>
    </location>
</feature>
<feature type="sequence variant" description="In 10F07.">
    <location>
        <begin position="46"/>
        <end position="69"/>
    </location>
</feature>
<feature type="sequence variant" description="In 02E11.">
    <original>P</original>
    <variation>A</variation>
    <location>
        <position position="47"/>
    </location>
</feature>
<feature type="sequence variant" description="In 02E11.">
    <location>
        <begin position="50"/>
        <end position="109"/>
    </location>
</feature>
<feature type="sequence variant" description="In 10F07.">
    <original>L</original>
    <variation>M</variation>
    <location>
        <position position="73"/>
    </location>
</feature>
<feature type="sequence variant" description="In 10F07.">
    <original>M</original>
    <variation>L</variation>
    <location>
        <position position="109"/>
    </location>
</feature>
<feature type="sequence variant" description="In 10F07.">
    <original>PPM</original>
    <variation>APL</variation>
    <location>
        <begin position="119"/>
        <end position="121"/>
    </location>
</feature>
<feature type="sequence variant" description="In 10F07.">
    <original>APL</original>
    <variation>PPM</variation>
    <location>
        <begin position="131"/>
        <end position="133"/>
    </location>
</feature>
<feature type="sequence variant" description="In 02E11.">
    <location>
        <begin position="200"/>
        <end position="201"/>
    </location>
</feature>
<feature type="sequence variant" description="In 02E11.">
    <original>G</original>
    <variation>GAA</variation>
    <location>
        <position position="223"/>
    </location>
</feature>
<feature type="sequence variant" description="In 10F07.">
    <original>G</original>
    <variation>GAAA</variation>
    <location>
        <position position="223"/>
    </location>
</feature>
<name>SVMI_ECHOC</name>
<evidence type="ECO:0000250" key="1">
    <source>
        <dbReference type="UniProtKB" id="P0C7P5"/>
    </source>
</evidence>
<evidence type="ECO:0000250" key="2">
    <source>
        <dbReference type="UniProtKB" id="P0DMD6"/>
    </source>
</evidence>
<evidence type="ECO:0000250" key="3">
    <source>
        <dbReference type="UniProtKB" id="Q27J49"/>
    </source>
</evidence>
<evidence type="ECO:0000255" key="4"/>
<evidence type="ECO:0000256" key="5">
    <source>
        <dbReference type="SAM" id="MobiDB-lite"/>
    </source>
</evidence>
<evidence type="ECO:0000269" key="6">
    <source>
    </source>
</evidence>
<evidence type="ECO:0000303" key="7">
    <source>
    </source>
</evidence>
<evidence type="ECO:0000305" key="8"/>
<evidence type="ECO:0000305" key="9">
    <source>
    </source>
</evidence>
<proteinExistence type="evidence at protein level"/>
<protein>
    <recommendedName>
        <fullName>Snake venom metalloprotease inhibitor 02D01</fullName>
    </recommendedName>
    <alternativeName>
        <fullName>02E11</fullName>
    </alternativeName>
    <alternativeName>
        <fullName>10F07</fullName>
    </alternativeName>
    <alternativeName>
        <fullName>Svmpi-Eoc7</fullName>
    </alternativeName>
    <component>
        <recommendedName>
            <fullName>Tripeptide pEKW 1</fullName>
        </recommendedName>
    </component>
    <component>
        <recommendedName>
            <fullName>Tripeptide pEKW 2</fullName>
        </recommendedName>
    </component>
    <component>
        <recommendedName>
            <fullName>Tripeptide pEKW 3</fullName>
        </recommendedName>
    </component>
    <component>
        <recommendedName>
            <fullName>Tripeptide pEKW 4</fullName>
        </recommendedName>
    </component>
    <component>
        <recommendedName>
            <fullName>Tripeptide pEKW 5</fullName>
        </recommendedName>
    </component>
    <component>
        <recommendedName>
            <fullName>Tripeptide pEKW 6</fullName>
        </recommendedName>
    </component>
    <component>
        <recommendedName>
            <fullName>Tripeptide pEKW 7</fullName>
        </recommendedName>
    </component>
    <component>
        <recommendedName>
            <fullName>Tripeptide pEKW 8</fullName>
        </recommendedName>
    </component>
    <component>
        <recommendedName>
            <fullName>Tripeptide pEKW 9</fullName>
        </recommendedName>
    </component>
    <component>
        <recommendedName>
            <fullName>Tripeptide pEKW 10</fullName>
        </recommendedName>
    </component>
    <component>
        <recommendedName>
            <fullName>Tripeptide pEKW 11</fullName>
        </recommendedName>
    </component>
    <component>
        <recommendedName>
            <fullName>Poly-His-poly-Gly peptide 4</fullName>
            <shortName>pHpG-4</shortName>
        </recommendedName>
    </component>
    <component>
        <recommendedName>
            <fullName>Poly-His-poly-Gly peptide 3</fullName>
            <shortName>pHpG-3</shortName>
        </recommendedName>
    </component>
    <component>
        <recommendedName>
            <fullName>Poly-His-poly-Gly peptide 2</fullName>
            <shortName>pHpG-2</shortName>
        </recommendedName>
    </component>
    <component>
        <recommendedName>
            <fullName>Poly-His-poly-Gly peptide 1</fullName>
            <shortName>pHpG-1</shortName>
        </recommendedName>
    </component>
    <component>
        <recommendedName>
            <fullName>C-type natriuretic peptide</fullName>
            <shortName>CNP</shortName>
        </recommendedName>
    </component>
</protein>